<accession>Q924A4</accession>
<sequence length="164" mass="18063">MLMPTYFLLPLLLLLGGPRTSLSHKFYNTGPVFSCLNTALSEVKKNKLEDVPLLSKKSFGHLPTQDPSGEEDDNQTHLQIKRTFSGAAGGNGAGSTRYRYQSQAQHKGKLYPDKPKSDRGTKFTLSLDVPTNIMNILFNIDKAKNLRAKAAANAQLMAQIGKKK</sequence>
<organism>
    <name type="scientific">Mus musculus</name>
    <name type="common">Mouse</name>
    <dbReference type="NCBI Taxonomy" id="10090"/>
    <lineage>
        <taxon>Eukaryota</taxon>
        <taxon>Metazoa</taxon>
        <taxon>Chordata</taxon>
        <taxon>Craniata</taxon>
        <taxon>Vertebrata</taxon>
        <taxon>Euteleostomi</taxon>
        <taxon>Mammalia</taxon>
        <taxon>Eutheria</taxon>
        <taxon>Euarchontoglires</taxon>
        <taxon>Glires</taxon>
        <taxon>Rodentia</taxon>
        <taxon>Myomorpha</taxon>
        <taxon>Muroidea</taxon>
        <taxon>Muridae</taxon>
        <taxon>Murinae</taxon>
        <taxon>Mus</taxon>
        <taxon>Mus</taxon>
    </lineage>
</organism>
<comment type="function">
    <text evidence="1">Suppresses food intake, delays gastric emptying and decreases heat-induced edema. Might represent an endogenous ligand for maintaining homeostasis after stress (By similarity).</text>
</comment>
<comment type="subunit">
    <text>Binds with high affinity to CRF receptors 2-alpha and 2-beta.</text>
</comment>
<comment type="subcellular location">
    <subcellularLocation>
        <location>Secreted</location>
    </subcellularLocation>
</comment>
<comment type="tissue specificity">
    <text evidence="4">Expressed in some areas of the brain including the hypothalamus, amygdala, and brainstem, but is not evident in the cerebellum, pituitary, or cerebral cortex; it is also expressed peripherally in small intestine and skin.</text>
</comment>
<comment type="similarity">
    <text evidence="5">Belongs to the sauvagine/corticotropin-releasing factor/urotensin I family.</text>
</comment>
<reference key="1">
    <citation type="journal article" date="2001" name="Proc. Natl. Acad. Sci. U.S.A.">
        <title>Identification of urocortin III, an additional member of the corticotropin-releasing factor (CRF) family with high affinity for the CRF2 receptor.</title>
        <authorList>
            <person name="Lewis K."/>
            <person name="Li C."/>
            <person name="Perrin M.H."/>
            <person name="Blount A."/>
            <person name="Kunitake K."/>
            <person name="Donaldson C."/>
            <person name="Vaughan J."/>
            <person name="Reyes T.M."/>
            <person name="Gulyas J."/>
            <person name="Fischer W."/>
            <person name="Bilezikjian L."/>
            <person name="Rivier J."/>
            <person name="Sawchenko P.E."/>
            <person name="Vale W.W."/>
        </authorList>
    </citation>
    <scope>NUCLEOTIDE SEQUENCE [GENOMIC DNA]</scope>
    <scope>SYNTHESIS OF UCN III</scope>
    <scope>TISSUE SPECIFICITY</scope>
</reference>
<feature type="signal peptide" evidence="2">
    <location>
        <begin position="1"/>
        <end position="23"/>
    </location>
</feature>
<feature type="propeptide" id="PRO_0000006247">
    <location>
        <begin position="24"/>
        <end position="121"/>
    </location>
</feature>
<feature type="chain" id="PRO_0000006248" description="Urocortin-3">
    <location>
        <begin position="123"/>
        <end position="160"/>
    </location>
</feature>
<feature type="region of interest" description="Disordered" evidence="3">
    <location>
        <begin position="58"/>
        <end position="120"/>
    </location>
</feature>
<feature type="compositionally biased region" description="Basic and acidic residues" evidence="3">
    <location>
        <begin position="110"/>
        <end position="120"/>
    </location>
</feature>
<feature type="modified residue" description="Isoleucine amide" evidence="2">
    <location>
        <position position="160"/>
    </location>
</feature>
<name>UCN3_MOUSE</name>
<gene>
    <name type="primary">Ucn3</name>
</gene>
<evidence type="ECO:0000250" key="1"/>
<evidence type="ECO:0000255" key="2"/>
<evidence type="ECO:0000256" key="3">
    <source>
        <dbReference type="SAM" id="MobiDB-lite"/>
    </source>
</evidence>
<evidence type="ECO:0000269" key="4">
    <source>
    </source>
</evidence>
<evidence type="ECO:0000305" key="5"/>
<dbReference type="EMBL" id="AF361944">
    <property type="protein sequence ID" value="AAK67318.1"/>
    <property type="molecule type" value="Genomic_DNA"/>
</dbReference>
<dbReference type="CCDS" id="CCDS26217.1"/>
<dbReference type="RefSeq" id="NP_112540.2">
    <property type="nucleotide sequence ID" value="NM_031250.5"/>
</dbReference>
<dbReference type="SMR" id="Q924A4"/>
<dbReference type="BioGRID" id="219919">
    <property type="interactions" value="2"/>
</dbReference>
<dbReference type="FunCoup" id="Q924A4">
    <property type="interactions" value="396"/>
</dbReference>
<dbReference type="STRING" id="10090.ENSMUSP00000049678"/>
<dbReference type="PhosphoSitePlus" id="Q924A4"/>
<dbReference type="PaxDb" id="10090-ENSMUSP00000049678"/>
<dbReference type="ProteomicsDB" id="300189"/>
<dbReference type="Antibodypedia" id="24078">
    <property type="antibodies" value="155 antibodies from 27 providers"/>
</dbReference>
<dbReference type="Ensembl" id="ENSMUST00000058610.8">
    <property type="protein sequence ID" value="ENSMUSP00000049678.8"/>
    <property type="gene ID" value="ENSMUSG00000044988.8"/>
</dbReference>
<dbReference type="GeneID" id="83428"/>
<dbReference type="KEGG" id="mmu:83428"/>
<dbReference type="UCSC" id="uc007pjh.2">
    <property type="organism name" value="mouse"/>
</dbReference>
<dbReference type="AGR" id="MGI:1932970"/>
<dbReference type="CTD" id="114131"/>
<dbReference type="MGI" id="MGI:1932970">
    <property type="gene designation" value="Ucn3"/>
</dbReference>
<dbReference type="VEuPathDB" id="HostDB:ENSMUSG00000044988"/>
<dbReference type="eggNOG" id="ENOG502S1WZ">
    <property type="taxonomic scope" value="Eukaryota"/>
</dbReference>
<dbReference type="GeneTree" id="ENSGT00940000160568"/>
<dbReference type="HOGENOM" id="CLU_1767442_0_0_1"/>
<dbReference type="InParanoid" id="Q924A4"/>
<dbReference type="OMA" id="FPGEGHY"/>
<dbReference type="OrthoDB" id="9949770at2759"/>
<dbReference type="PhylomeDB" id="Q924A4"/>
<dbReference type="TreeFam" id="TF330723"/>
<dbReference type="Reactome" id="R-MMU-373080">
    <property type="pathway name" value="Class B/2 (Secretin family receptors)"/>
</dbReference>
<dbReference type="BioGRID-ORCS" id="83428">
    <property type="hits" value="2 hits in 78 CRISPR screens"/>
</dbReference>
<dbReference type="PRO" id="PR:Q924A4"/>
<dbReference type="Proteomes" id="UP000000589">
    <property type="component" value="Chromosome 13"/>
</dbReference>
<dbReference type="RNAct" id="Q924A4">
    <property type="molecule type" value="protein"/>
</dbReference>
<dbReference type="Bgee" id="ENSMUSG00000044988">
    <property type="expression patterns" value="Expressed in islet of Langerhans and 6 other cell types or tissues"/>
</dbReference>
<dbReference type="ExpressionAtlas" id="Q924A4">
    <property type="expression patterns" value="baseline and differential"/>
</dbReference>
<dbReference type="GO" id="GO:0043679">
    <property type="term" value="C:axon terminus"/>
    <property type="evidence" value="ECO:0007669"/>
    <property type="project" value="Ensembl"/>
</dbReference>
<dbReference type="GO" id="GO:0005615">
    <property type="term" value="C:extracellular space"/>
    <property type="evidence" value="ECO:0007669"/>
    <property type="project" value="InterPro"/>
</dbReference>
<dbReference type="GO" id="GO:0043196">
    <property type="term" value="C:varicosity"/>
    <property type="evidence" value="ECO:0007669"/>
    <property type="project" value="Ensembl"/>
</dbReference>
<dbReference type="GO" id="GO:0051431">
    <property type="term" value="F:corticotropin-releasing hormone receptor 2 binding"/>
    <property type="evidence" value="ECO:0007669"/>
    <property type="project" value="InterPro"/>
</dbReference>
<dbReference type="GO" id="GO:0005184">
    <property type="term" value="F:neuropeptide hormone activity"/>
    <property type="evidence" value="ECO:0000304"/>
    <property type="project" value="MGI"/>
</dbReference>
<dbReference type="GO" id="GO:0007189">
    <property type="term" value="P:adenylate cyclase-activating G protein-coupled receptor signaling pathway"/>
    <property type="evidence" value="ECO:0000314"/>
    <property type="project" value="MGI"/>
</dbReference>
<dbReference type="GO" id="GO:0071456">
    <property type="term" value="P:cellular response to hypoxia"/>
    <property type="evidence" value="ECO:0007669"/>
    <property type="project" value="Ensembl"/>
</dbReference>
<dbReference type="GO" id="GO:0031669">
    <property type="term" value="P:cellular response to nutrient levels"/>
    <property type="evidence" value="ECO:0007669"/>
    <property type="project" value="Ensembl"/>
</dbReference>
<dbReference type="GO" id="GO:0007586">
    <property type="term" value="P:digestion"/>
    <property type="evidence" value="ECO:0007669"/>
    <property type="project" value="InterPro"/>
</dbReference>
<dbReference type="GO" id="GO:0009755">
    <property type="term" value="P:hormone-mediated signaling pathway"/>
    <property type="evidence" value="ECO:0007669"/>
    <property type="project" value="Ensembl"/>
</dbReference>
<dbReference type="GO" id="GO:0007218">
    <property type="term" value="P:neuropeptide signaling pathway"/>
    <property type="evidence" value="ECO:0000304"/>
    <property type="project" value="MGI"/>
</dbReference>
<dbReference type="GO" id="GO:0032024">
    <property type="term" value="P:positive regulation of insulin secretion"/>
    <property type="evidence" value="ECO:0007669"/>
    <property type="project" value="Ensembl"/>
</dbReference>
<dbReference type="GO" id="GO:0045838">
    <property type="term" value="P:positive regulation of membrane potential"/>
    <property type="evidence" value="ECO:0007669"/>
    <property type="project" value="Ensembl"/>
</dbReference>
<dbReference type="GO" id="GO:0051412">
    <property type="term" value="P:response to corticosterone"/>
    <property type="evidence" value="ECO:0007669"/>
    <property type="project" value="Ensembl"/>
</dbReference>
<dbReference type="GO" id="GO:0009749">
    <property type="term" value="P:response to glucose"/>
    <property type="evidence" value="ECO:0007669"/>
    <property type="project" value="Ensembl"/>
</dbReference>
<dbReference type="GO" id="GO:0035902">
    <property type="term" value="P:response to immobilization stress"/>
    <property type="evidence" value="ECO:0007669"/>
    <property type="project" value="Ensembl"/>
</dbReference>
<dbReference type="GO" id="GO:0042594">
    <property type="term" value="P:response to starvation"/>
    <property type="evidence" value="ECO:0007669"/>
    <property type="project" value="Ensembl"/>
</dbReference>
<dbReference type="InterPro" id="IPR000187">
    <property type="entry name" value="CRF"/>
</dbReference>
<dbReference type="InterPro" id="IPR024270">
    <property type="entry name" value="Urocortin_II/III"/>
</dbReference>
<dbReference type="PANTHER" id="PTHR17575">
    <property type="entry name" value="UROCORTIN-2 AND 3"/>
    <property type="match status" value="1"/>
</dbReference>
<dbReference type="PANTHER" id="PTHR17575:SF1">
    <property type="entry name" value="UROCORTIN-3"/>
    <property type="match status" value="1"/>
</dbReference>
<dbReference type="Pfam" id="PF00473">
    <property type="entry name" value="CRF"/>
    <property type="match status" value="1"/>
</dbReference>
<protein>
    <recommendedName>
        <fullName>Urocortin-3</fullName>
    </recommendedName>
    <alternativeName>
        <fullName>Urocortin III</fullName>
        <shortName>Ucn III</shortName>
    </alternativeName>
</protein>
<keyword id="KW-0027">Amidation</keyword>
<keyword id="KW-0372">Hormone</keyword>
<keyword id="KW-1185">Reference proteome</keyword>
<keyword id="KW-0964">Secreted</keyword>
<keyword id="KW-0732">Signal</keyword>
<proteinExistence type="evidence at transcript level"/>